<gene>
    <name evidence="1" type="primary">mnmG</name>
    <name evidence="1" type="synonym">gidA</name>
    <name type="ordered locus">OTT_0511</name>
</gene>
<name>MNMG_ORITI</name>
<organism>
    <name type="scientific">Orientia tsutsugamushi (strain Ikeda)</name>
    <name type="common">Rickettsia tsutsugamushi</name>
    <dbReference type="NCBI Taxonomy" id="334380"/>
    <lineage>
        <taxon>Bacteria</taxon>
        <taxon>Pseudomonadati</taxon>
        <taxon>Pseudomonadota</taxon>
        <taxon>Alphaproteobacteria</taxon>
        <taxon>Rickettsiales</taxon>
        <taxon>Rickettsiaceae</taxon>
        <taxon>Rickettsieae</taxon>
        <taxon>Orientia</taxon>
    </lineage>
</organism>
<accession>B3CR62</accession>
<sequence length="622" mass="69073">MNKFDVVVVGGGHAGCEAAAAAARIGVKVALITLKPENLGEMPCNPAIGGRGKGHIVKEVDALDGLIGYIADQAGIHYKMLNHTKGPAVWGPRAQIDRALYKSAMYSTIMNYPNLTTIFASVEDIKVIANKVTAVIVNGKEIYCQKVILTTGTFLSGVIHRGKEQIKAGRLGENASYGLSNTLSELGLRLGRLKTGTPPRIDSRTIDYSKLEEQPGDLIPTPFSEITKKVLVPQIKCYITRTNEITHKIIKENLHLSAMYSGQIQGTGPRYCPSIEDKIIRFSHNASHQIFLEPEGLNSNTIYPNGISTSLPSDVQENMIRTIEGLENCKIIAYGYAIEYDYVDPRQLKRSLEVKSVDGLYLAGQINGTTGYEEAAGQGIMAGINAALAVKKQDPFILDRTDAYIGVMIDDLTNGIDEPYRMFTSRSEYRLSIRADNADQRLTPKAIDLGCVSQLRKEVFQKKLSKLNTLRDYVQSLTITPKQLQNCGYQISQNGIARTAFSLLGLPNFGINIVKDIYPELNRYDNNLLLLLTYESKYHAYLERQKEDIVLFKQEETYQIPQDLNYDQIPSLSIEVREKLKQSQPETIRAAKHINGVTPSAIMAIIIFLKTKYLNSSITDKK</sequence>
<protein>
    <recommendedName>
        <fullName evidence="1">tRNA uridine 5-carboxymethylaminomethyl modification enzyme MnmG</fullName>
    </recommendedName>
    <alternativeName>
        <fullName evidence="1">Glucose-inhibited division protein A</fullName>
    </alternativeName>
</protein>
<evidence type="ECO:0000255" key="1">
    <source>
        <dbReference type="HAMAP-Rule" id="MF_00129"/>
    </source>
</evidence>
<keyword id="KW-0963">Cytoplasm</keyword>
<keyword id="KW-0274">FAD</keyword>
<keyword id="KW-0285">Flavoprotein</keyword>
<keyword id="KW-0520">NAD</keyword>
<keyword id="KW-0819">tRNA processing</keyword>
<proteinExistence type="inferred from homology"/>
<feature type="chain" id="PRO_1000095655" description="tRNA uridine 5-carboxymethylaminomethyl modification enzyme MnmG">
    <location>
        <begin position="1"/>
        <end position="622"/>
    </location>
</feature>
<feature type="binding site" evidence="1">
    <location>
        <begin position="10"/>
        <end position="15"/>
    </location>
    <ligand>
        <name>FAD</name>
        <dbReference type="ChEBI" id="CHEBI:57692"/>
    </ligand>
</feature>
<feature type="binding site" evidence="1">
    <location>
        <position position="122"/>
    </location>
    <ligand>
        <name>FAD</name>
        <dbReference type="ChEBI" id="CHEBI:57692"/>
    </ligand>
</feature>
<feature type="binding site" evidence="1">
    <location>
        <position position="176"/>
    </location>
    <ligand>
        <name>FAD</name>
        <dbReference type="ChEBI" id="CHEBI:57692"/>
    </ligand>
</feature>
<feature type="binding site" evidence="1">
    <location>
        <begin position="268"/>
        <end position="282"/>
    </location>
    <ligand>
        <name>NAD(+)</name>
        <dbReference type="ChEBI" id="CHEBI:57540"/>
    </ligand>
</feature>
<feature type="binding site" evidence="1">
    <location>
        <position position="365"/>
    </location>
    <ligand>
        <name>FAD</name>
        <dbReference type="ChEBI" id="CHEBI:57692"/>
    </ligand>
</feature>
<comment type="function">
    <text evidence="1">NAD-binding protein involved in the addition of a carboxymethylaminomethyl (cmnm) group at the wobble position (U34) of certain tRNAs, forming tRNA-cmnm(5)s(2)U34.</text>
</comment>
<comment type="cofactor">
    <cofactor evidence="1">
        <name>FAD</name>
        <dbReference type="ChEBI" id="CHEBI:57692"/>
    </cofactor>
</comment>
<comment type="subunit">
    <text evidence="1">Homodimer. Heterotetramer of two MnmE and two MnmG subunits.</text>
</comment>
<comment type="subcellular location">
    <subcellularLocation>
        <location evidence="1">Cytoplasm</location>
    </subcellularLocation>
</comment>
<comment type="similarity">
    <text evidence="1">Belongs to the MnmG family.</text>
</comment>
<reference key="1">
    <citation type="journal article" date="2008" name="DNA Res.">
        <title>The whole-genome sequencing of the obligate intracellular bacterium Orientia tsutsugamushi revealed massive gene amplification during reductive genome evolution.</title>
        <authorList>
            <person name="Nakayama K."/>
            <person name="Yamashita A."/>
            <person name="Kurokawa K."/>
            <person name="Morimoto T."/>
            <person name="Ogawa M."/>
            <person name="Fukuhara M."/>
            <person name="Urakami H."/>
            <person name="Ohnishi M."/>
            <person name="Uchiyama I."/>
            <person name="Ogura Y."/>
            <person name="Ooka T."/>
            <person name="Oshima K."/>
            <person name="Tamura A."/>
            <person name="Hattori M."/>
            <person name="Hayashi T."/>
        </authorList>
    </citation>
    <scope>NUCLEOTIDE SEQUENCE [LARGE SCALE GENOMIC DNA]</scope>
    <source>
        <strain>Ikeda</strain>
    </source>
</reference>
<dbReference type="EMBL" id="AP008981">
    <property type="protein sequence ID" value="BAG39969.1"/>
    <property type="molecule type" value="Genomic_DNA"/>
</dbReference>
<dbReference type="RefSeq" id="WP_012461165.1">
    <property type="nucleotide sequence ID" value="NC_010793.1"/>
</dbReference>
<dbReference type="SMR" id="B3CR62"/>
<dbReference type="KEGG" id="ott:OTT_0511"/>
<dbReference type="HOGENOM" id="CLU_007831_2_2_5"/>
<dbReference type="OrthoDB" id="9815560at2"/>
<dbReference type="Proteomes" id="UP000001033">
    <property type="component" value="Chromosome"/>
</dbReference>
<dbReference type="GO" id="GO:0005829">
    <property type="term" value="C:cytosol"/>
    <property type="evidence" value="ECO:0007669"/>
    <property type="project" value="TreeGrafter"/>
</dbReference>
<dbReference type="GO" id="GO:0050660">
    <property type="term" value="F:flavin adenine dinucleotide binding"/>
    <property type="evidence" value="ECO:0007669"/>
    <property type="project" value="UniProtKB-UniRule"/>
</dbReference>
<dbReference type="GO" id="GO:0030488">
    <property type="term" value="P:tRNA methylation"/>
    <property type="evidence" value="ECO:0007669"/>
    <property type="project" value="TreeGrafter"/>
</dbReference>
<dbReference type="GO" id="GO:0002098">
    <property type="term" value="P:tRNA wobble uridine modification"/>
    <property type="evidence" value="ECO:0007669"/>
    <property type="project" value="InterPro"/>
</dbReference>
<dbReference type="FunFam" id="3.50.50.60:FF:000082">
    <property type="entry name" value="protein MTO1 homolog, mitochondrial isoform X1"/>
    <property type="match status" value="1"/>
</dbReference>
<dbReference type="FunFam" id="1.10.150.570:FF:000001">
    <property type="entry name" value="tRNA uridine 5-carboxymethylaminomethyl modification enzyme MnmG"/>
    <property type="match status" value="1"/>
</dbReference>
<dbReference type="FunFam" id="3.50.50.60:FF:000002">
    <property type="entry name" value="tRNA uridine 5-carboxymethylaminomethyl modification enzyme MnmG"/>
    <property type="match status" value="1"/>
</dbReference>
<dbReference type="Gene3D" id="3.50.50.60">
    <property type="entry name" value="FAD/NAD(P)-binding domain"/>
    <property type="match status" value="2"/>
</dbReference>
<dbReference type="Gene3D" id="1.10.150.570">
    <property type="entry name" value="GidA associated domain, C-terminal subdomain"/>
    <property type="match status" value="1"/>
</dbReference>
<dbReference type="HAMAP" id="MF_00129">
    <property type="entry name" value="MnmG_GidA"/>
    <property type="match status" value="1"/>
</dbReference>
<dbReference type="InterPro" id="IPR036188">
    <property type="entry name" value="FAD/NAD-bd_sf"/>
</dbReference>
<dbReference type="InterPro" id="IPR049312">
    <property type="entry name" value="GIDA_C_N"/>
</dbReference>
<dbReference type="InterPro" id="IPR004416">
    <property type="entry name" value="MnmG"/>
</dbReference>
<dbReference type="InterPro" id="IPR002218">
    <property type="entry name" value="MnmG-rel"/>
</dbReference>
<dbReference type="InterPro" id="IPR020595">
    <property type="entry name" value="MnmG-rel_CS"/>
</dbReference>
<dbReference type="InterPro" id="IPR026904">
    <property type="entry name" value="MnmG_C"/>
</dbReference>
<dbReference type="InterPro" id="IPR047001">
    <property type="entry name" value="MnmG_C_subdom"/>
</dbReference>
<dbReference type="InterPro" id="IPR044920">
    <property type="entry name" value="MnmG_C_subdom_sf"/>
</dbReference>
<dbReference type="InterPro" id="IPR040131">
    <property type="entry name" value="MnmG_N"/>
</dbReference>
<dbReference type="NCBIfam" id="TIGR00136">
    <property type="entry name" value="mnmG_gidA"/>
    <property type="match status" value="1"/>
</dbReference>
<dbReference type="PANTHER" id="PTHR11806">
    <property type="entry name" value="GLUCOSE INHIBITED DIVISION PROTEIN A"/>
    <property type="match status" value="1"/>
</dbReference>
<dbReference type="PANTHER" id="PTHR11806:SF0">
    <property type="entry name" value="PROTEIN MTO1 HOMOLOG, MITOCHONDRIAL"/>
    <property type="match status" value="1"/>
</dbReference>
<dbReference type="Pfam" id="PF01134">
    <property type="entry name" value="GIDA"/>
    <property type="match status" value="1"/>
</dbReference>
<dbReference type="Pfam" id="PF21680">
    <property type="entry name" value="GIDA_C_1st"/>
    <property type="match status" value="1"/>
</dbReference>
<dbReference type="Pfam" id="PF13932">
    <property type="entry name" value="SAM_GIDA_C"/>
    <property type="match status" value="1"/>
</dbReference>
<dbReference type="PRINTS" id="PR00411">
    <property type="entry name" value="PNDRDTASEI"/>
</dbReference>
<dbReference type="SMART" id="SM01228">
    <property type="entry name" value="GIDA_assoc_3"/>
    <property type="match status" value="1"/>
</dbReference>
<dbReference type="SUPFAM" id="SSF51905">
    <property type="entry name" value="FAD/NAD(P)-binding domain"/>
    <property type="match status" value="1"/>
</dbReference>
<dbReference type="PROSITE" id="PS01280">
    <property type="entry name" value="GIDA_1"/>
    <property type="match status" value="1"/>
</dbReference>
<dbReference type="PROSITE" id="PS01281">
    <property type="entry name" value="GIDA_2"/>
    <property type="match status" value="1"/>
</dbReference>